<dbReference type="EMBL" id="AE014075">
    <property type="protein sequence ID" value="AAN81501.1"/>
    <property type="status" value="ALT_INIT"/>
    <property type="molecule type" value="Genomic_DNA"/>
</dbReference>
<dbReference type="RefSeq" id="WP_001196622.1">
    <property type="nucleotide sequence ID" value="NC_004431.1"/>
</dbReference>
<dbReference type="SMR" id="Q8FF44"/>
<dbReference type="STRING" id="199310.c3051"/>
<dbReference type="KEGG" id="ecc:c3051"/>
<dbReference type="eggNOG" id="COG0443">
    <property type="taxonomic scope" value="Bacteria"/>
</dbReference>
<dbReference type="HOGENOM" id="CLU_005965_2_1_6"/>
<dbReference type="Proteomes" id="UP000001410">
    <property type="component" value="Chromosome"/>
</dbReference>
<dbReference type="GO" id="GO:0005524">
    <property type="term" value="F:ATP binding"/>
    <property type="evidence" value="ECO:0007669"/>
    <property type="project" value="UniProtKB-KW"/>
</dbReference>
<dbReference type="GO" id="GO:0016887">
    <property type="term" value="F:ATP hydrolysis activity"/>
    <property type="evidence" value="ECO:0007669"/>
    <property type="project" value="UniProtKB-UniRule"/>
</dbReference>
<dbReference type="GO" id="GO:0140662">
    <property type="term" value="F:ATP-dependent protein folding chaperone"/>
    <property type="evidence" value="ECO:0007669"/>
    <property type="project" value="InterPro"/>
</dbReference>
<dbReference type="GO" id="GO:0051082">
    <property type="term" value="F:unfolded protein binding"/>
    <property type="evidence" value="ECO:0007669"/>
    <property type="project" value="InterPro"/>
</dbReference>
<dbReference type="GO" id="GO:0016226">
    <property type="term" value="P:iron-sulfur cluster assembly"/>
    <property type="evidence" value="ECO:0007669"/>
    <property type="project" value="InterPro"/>
</dbReference>
<dbReference type="CDD" id="cd10236">
    <property type="entry name" value="ASKHA_NBD_HSP70_HscA"/>
    <property type="match status" value="1"/>
</dbReference>
<dbReference type="FunFam" id="1.20.1270.10:FF:000006">
    <property type="entry name" value="Chaperone protein HscA"/>
    <property type="match status" value="1"/>
</dbReference>
<dbReference type="FunFam" id="3.30.420.40:FF:000046">
    <property type="entry name" value="Chaperone protein HscA"/>
    <property type="match status" value="1"/>
</dbReference>
<dbReference type="FunFam" id="3.90.640.10:FF:000013">
    <property type="entry name" value="Chaperone protein HscA"/>
    <property type="match status" value="1"/>
</dbReference>
<dbReference type="FunFam" id="2.60.34.10:FF:000005">
    <property type="entry name" value="Chaperone protein HscA homolog"/>
    <property type="match status" value="1"/>
</dbReference>
<dbReference type="FunFam" id="3.30.420.40:FF:000020">
    <property type="entry name" value="Chaperone protein HscA homolog"/>
    <property type="match status" value="1"/>
</dbReference>
<dbReference type="Gene3D" id="1.20.1270.10">
    <property type="match status" value="1"/>
</dbReference>
<dbReference type="Gene3D" id="3.30.420.40">
    <property type="match status" value="2"/>
</dbReference>
<dbReference type="Gene3D" id="3.90.640.10">
    <property type="entry name" value="Actin, Chain A, domain 4"/>
    <property type="match status" value="1"/>
</dbReference>
<dbReference type="Gene3D" id="2.60.34.10">
    <property type="entry name" value="Substrate Binding Domain Of DNAk, Chain A, domain 1"/>
    <property type="match status" value="1"/>
</dbReference>
<dbReference type="HAMAP" id="MF_00679">
    <property type="entry name" value="HscA"/>
    <property type="match status" value="1"/>
</dbReference>
<dbReference type="InterPro" id="IPR043129">
    <property type="entry name" value="ATPase_NBD"/>
</dbReference>
<dbReference type="InterPro" id="IPR018181">
    <property type="entry name" value="Heat_shock_70_CS"/>
</dbReference>
<dbReference type="InterPro" id="IPR042039">
    <property type="entry name" value="HscA_NBD"/>
</dbReference>
<dbReference type="InterPro" id="IPR029048">
    <property type="entry name" value="HSP70_C_sf"/>
</dbReference>
<dbReference type="InterPro" id="IPR029047">
    <property type="entry name" value="HSP70_peptide-bd_sf"/>
</dbReference>
<dbReference type="InterPro" id="IPR013126">
    <property type="entry name" value="Hsp_70_fam"/>
</dbReference>
<dbReference type="InterPro" id="IPR010236">
    <property type="entry name" value="ISC_FeS_clus_asmbl_HscA"/>
</dbReference>
<dbReference type="NCBIfam" id="TIGR01991">
    <property type="entry name" value="HscA"/>
    <property type="match status" value="1"/>
</dbReference>
<dbReference type="NCBIfam" id="NF003520">
    <property type="entry name" value="PRK05183.1"/>
    <property type="match status" value="1"/>
</dbReference>
<dbReference type="PANTHER" id="PTHR19375">
    <property type="entry name" value="HEAT SHOCK PROTEIN 70KDA"/>
    <property type="match status" value="1"/>
</dbReference>
<dbReference type="Pfam" id="PF00012">
    <property type="entry name" value="HSP70"/>
    <property type="match status" value="1"/>
</dbReference>
<dbReference type="PRINTS" id="PR00301">
    <property type="entry name" value="HEATSHOCK70"/>
</dbReference>
<dbReference type="SUPFAM" id="SSF53067">
    <property type="entry name" value="Actin-like ATPase domain"/>
    <property type="match status" value="2"/>
</dbReference>
<dbReference type="SUPFAM" id="SSF100934">
    <property type="entry name" value="Heat shock protein 70kD (HSP70), C-terminal subdomain"/>
    <property type="match status" value="1"/>
</dbReference>
<dbReference type="SUPFAM" id="SSF100920">
    <property type="entry name" value="Heat shock protein 70kD (HSP70), peptide-binding domain"/>
    <property type="match status" value="1"/>
</dbReference>
<dbReference type="PROSITE" id="PS00297">
    <property type="entry name" value="HSP70_1"/>
    <property type="match status" value="1"/>
</dbReference>
<dbReference type="PROSITE" id="PS00329">
    <property type="entry name" value="HSP70_2"/>
    <property type="match status" value="1"/>
</dbReference>
<dbReference type="PROSITE" id="PS01036">
    <property type="entry name" value="HSP70_3"/>
    <property type="match status" value="1"/>
</dbReference>
<sequence>MALLQISEPGLSAAPHQRRLAAGIDLGTTNSLVATVRSGQAETLADHEGRHLLPSVVHYQQQGHSVGYDARTNAALDTANTISSVKRLMGRSLADIQQRYPHLPYQFQASENGLPMIETAAGLLNPVRVSADILKALAARATEALAGELDGVVITVPAYFDDAQRQGTKDAARLAGLHVLRLLNEPTAAAIAYGLDSGQEGVIAVYDLGGGTFDISILRLSRGVFEVLATGGDSALGGDDFDHLLADYIREQAGIPDRSDNRVQRELLDAAIAAKIALSDADSVTVNVAGWQGEISREQFNELIAPLVKRTLLACRRALKDAGVEADEVLEVVVVGGSTRVPLVRERVGEFFGRPPLTSIDPDKVVAIGAAIQADILVGNKPDSEMLLLDVIPLSLGLETMGGLVEKVIPRNTTIPVARAQDFTTFKDGQTAMSIHVMQGERELVQDCRSLARFALRGIPALPAGGAHIRVTFQVDADGLLSVTAMEKSTGVEASIQVKPSYGLTDSEIASMIKDSMSYAEQDVKARMLAEQKVEAARVLESLHGALAADAALLSAAERQAIDDAAAHLSEVAQGDDVDAIEQAIKNVDKQTQDFAARRMDQSVRRALKGHSVDEV</sequence>
<accession>Q8FF44</accession>
<evidence type="ECO:0000255" key="1">
    <source>
        <dbReference type="HAMAP-Rule" id="MF_00679"/>
    </source>
</evidence>
<evidence type="ECO:0000305" key="2"/>
<feature type="chain" id="PRO_0000078627" description="Chaperone protein HscA">
    <location>
        <begin position="1"/>
        <end position="616"/>
    </location>
</feature>
<proteinExistence type="inferred from homology"/>
<organism>
    <name type="scientific">Escherichia coli O6:H1 (strain CFT073 / ATCC 700928 / UPEC)</name>
    <dbReference type="NCBI Taxonomy" id="199310"/>
    <lineage>
        <taxon>Bacteria</taxon>
        <taxon>Pseudomonadati</taxon>
        <taxon>Pseudomonadota</taxon>
        <taxon>Gammaproteobacteria</taxon>
        <taxon>Enterobacterales</taxon>
        <taxon>Enterobacteriaceae</taxon>
        <taxon>Escherichia</taxon>
    </lineage>
</organism>
<reference key="1">
    <citation type="journal article" date="2002" name="Proc. Natl. Acad. Sci. U.S.A.">
        <title>Extensive mosaic structure revealed by the complete genome sequence of uropathogenic Escherichia coli.</title>
        <authorList>
            <person name="Welch R.A."/>
            <person name="Burland V."/>
            <person name="Plunkett G. III"/>
            <person name="Redford P."/>
            <person name="Roesch P."/>
            <person name="Rasko D."/>
            <person name="Buckles E.L."/>
            <person name="Liou S.-R."/>
            <person name="Boutin A."/>
            <person name="Hackett J."/>
            <person name="Stroud D."/>
            <person name="Mayhew G.F."/>
            <person name="Rose D.J."/>
            <person name="Zhou S."/>
            <person name="Schwartz D.C."/>
            <person name="Perna N.T."/>
            <person name="Mobley H.L.T."/>
            <person name="Donnenberg M.S."/>
            <person name="Blattner F.R."/>
        </authorList>
    </citation>
    <scope>NUCLEOTIDE SEQUENCE [LARGE SCALE GENOMIC DNA]</scope>
    <source>
        <strain>CFT073 / ATCC 700928 / UPEC</strain>
    </source>
</reference>
<protein>
    <recommendedName>
        <fullName evidence="1">Chaperone protein HscA</fullName>
    </recommendedName>
    <alternativeName>
        <fullName evidence="1">Hsc66</fullName>
    </alternativeName>
</protein>
<comment type="function">
    <text evidence="1">Chaperone involved in the maturation of iron-sulfur cluster-containing proteins. Has a low intrinsic ATPase activity which is markedly stimulated by HscB. Involved in the maturation of IscU.</text>
</comment>
<comment type="similarity">
    <text evidence="1">Belongs to the heat shock protein 70 family.</text>
</comment>
<comment type="sequence caution" evidence="2">
    <conflict type="erroneous initiation">
        <sequence resource="EMBL-CDS" id="AAN81501"/>
    </conflict>
</comment>
<keyword id="KW-0067">ATP-binding</keyword>
<keyword id="KW-0143">Chaperone</keyword>
<keyword id="KW-0547">Nucleotide-binding</keyword>
<keyword id="KW-1185">Reference proteome</keyword>
<gene>
    <name evidence="1" type="primary">hscA</name>
    <name type="ordered locus">c3051</name>
</gene>
<name>HSCA_ECOL6</name>